<reference key="1">
    <citation type="journal article" date="2005" name="PLoS Biol.">
        <title>The Wolbachia genome of Brugia malayi: endosymbiont evolution within a human pathogenic nematode.</title>
        <authorList>
            <person name="Foster J."/>
            <person name="Ganatra M."/>
            <person name="Kamal I."/>
            <person name="Ware J."/>
            <person name="Makarova K."/>
            <person name="Ivanova N."/>
            <person name="Bhattacharyya A."/>
            <person name="Kapatral V."/>
            <person name="Kumar S."/>
            <person name="Posfai J."/>
            <person name="Vincze T."/>
            <person name="Ingram J."/>
            <person name="Moran L."/>
            <person name="Lapidus A."/>
            <person name="Omelchenko M."/>
            <person name="Kyrpides N."/>
            <person name="Ghedin E."/>
            <person name="Wang S."/>
            <person name="Goltsman E."/>
            <person name="Joukov V."/>
            <person name="Ostrovskaya O."/>
            <person name="Tsukerman K."/>
            <person name="Mazur M."/>
            <person name="Comb D."/>
            <person name="Koonin E."/>
            <person name="Slatko B."/>
        </authorList>
    </citation>
    <scope>NUCLEOTIDE SEQUENCE [LARGE SCALE GENOMIC DNA]</scope>
    <source>
        <strain>TRS</strain>
    </source>
</reference>
<feature type="chain" id="PRO_0000229590" description="Small ribosomal subunit protein bS6">
    <location>
        <begin position="1"/>
        <end position="260"/>
    </location>
</feature>
<dbReference type="EMBL" id="AE017321">
    <property type="protein sequence ID" value="AAW71088.1"/>
    <property type="molecule type" value="Genomic_DNA"/>
</dbReference>
<dbReference type="STRING" id="292805.Wbm0500"/>
<dbReference type="KEGG" id="wbm:Wbm0500"/>
<dbReference type="eggNOG" id="COG0360">
    <property type="taxonomic scope" value="Bacteria"/>
</dbReference>
<dbReference type="HOGENOM" id="CLU_1069388_0_0_5"/>
<dbReference type="Proteomes" id="UP000000534">
    <property type="component" value="Chromosome"/>
</dbReference>
<dbReference type="GO" id="GO:1990904">
    <property type="term" value="C:ribonucleoprotein complex"/>
    <property type="evidence" value="ECO:0007669"/>
    <property type="project" value="UniProtKB-KW"/>
</dbReference>
<dbReference type="GO" id="GO:0005840">
    <property type="term" value="C:ribosome"/>
    <property type="evidence" value="ECO:0007669"/>
    <property type="project" value="UniProtKB-KW"/>
</dbReference>
<dbReference type="GO" id="GO:0019843">
    <property type="term" value="F:rRNA binding"/>
    <property type="evidence" value="ECO:0007669"/>
    <property type="project" value="UniProtKB-UniRule"/>
</dbReference>
<dbReference type="GO" id="GO:0003735">
    <property type="term" value="F:structural constituent of ribosome"/>
    <property type="evidence" value="ECO:0007669"/>
    <property type="project" value="InterPro"/>
</dbReference>
<dbReference type="GO" id="GO:0006412">
    <property type="term" value="P:translation"/>
    <property type="evidence" value="ECO:0007669"/>
    <property type="project" value="UniProtKB-UniRule"/>
</dbReference>
<dbReference type="CDD" id="cd00473">
    <property type="entry name" value="bS6"/>
    <property type="match status" value="1"/>
</dbReference>
<dbReference type="Gene3D" id="3.30.70.60">
    <property type="match status" value="1"/>
</dbReference>
<dbReference type="HAMAP" id="MF_00360">
    <property type="entry name" value="Ribosomal_bS6"/>
    <property type="match status" value="1"/>
</dbReference>
<dbReference type="InterPro" id="IPR000529">
    <property type="entry name" value="Ribosomal_bS6"/>
</dbReference>
<dbReference type="InterPro" id="IPR035980">
    <property type="entry name" value="Ribosomal_bS6_sf"/>
</dbReference>
<dbReference type="InterPro" id="IPR020814">
    <property type="entry name" value="Ribosomal_S6_plastid/chlpt"/>
</dbReference>
<dbReference type="InterPro" id="IPR014717">
    <property type="entry name" value="Transl_elong_EF1B/ribsomal_bS6"/>
</dbReference>
<dbReference type="NCBIfam" id="TIGR00166">
    <property type="entry name" value="S6"/>
    <property type="match status" value="1"/>
</dbReference>
<dbReference type="Pfam" id="PF01250">
    <property type="entry name" value="Ribosomal_S6"/>
    <property type="match status" value="1"/>
</dbReference>
<dbReference type="SUPFAM" id="SSF54995">
    <property type="entry name" value="Ribosomal protein S6"/>
    <property type="match status" value="1"/>
</dbReference>
<sequence>MNLYEFTFIAQQGLLQQEVEGMAQELGVSLKNIKADIMFQQIKGILEKGSDKFTKRDSEMHAKDIQENLIAYSSFLESFAKILWIELEEDLSNLKEVKLKISKELKDDLKGLGIAQGFIKLPEGGKQIAKNAFIHNAVSALKEDISKHLIKIFQGILQNFGMAEPNQSNKTLEMLLDNIEASGLIKYEYWGLLDFAYPINKMKSGHYCIMCISSTSNIMDEFVRRIKLNENIIRHLSVHVDKFFEGKSHMMNKQVEEQSA</sequence>
<evidence type="ECO:0000255" key="1">
    <source>
        <dbReference type="HAMAP-Rule" id="MF_00360"/>
    </source>
</evidence>
<evidence type="ECO:0000305" key="2"/>
<gene>
    <name evidence="1" type="primary">rpsF</name>
    <name type="ordered locus">Wbm0500</name>
</gene>
<protein>
    <recommendedName>
        <fullName evidence="1">Small ribosomal subunit protein bS6</fullName>
    </recommendedName>
    <alternativeName>
        <fullName evidence="2">30S ribosomal protein S6</fullName>
    </alternativeName>
</protein>
<accession>Q5GSD6</accession>
<keyword id="KW-1185">Reference proteome</keyword>
<keyword id="KW-0687">Ribonucleoprotein</keyword>
<keyword id="KW-0689">Ribosomal protein</keyword>
<keyword id="KW-0694">RNA-binding</keyword>
<keyword id="KW-0699">rRNA-binding</keyword>
<proteinExistence type="inferred from homology"/>
<comment type="function">
    <text evidence="1">Binds together with bS18 to 16S ribosomal RNA.</text>
</comment>
<comment type="similarity">
    <text evidence="1">Belongs to the bacterial ribosomal protein bS6 family.</text>
</comment>
<name>RS6_WOLTR</name>
<organism>
    <name type="scientific">Wolbachia sp. subsp. Brugia malayi (strain TRS)</name>
    <dbReference type="NCBI Taxonomy" id="292805"/>
    <lineage>
        <taxon>Bacteria</taxon>
        <taxon>Pseudomonadati</taxon>
        <taxon>Pseudomonadota</taxon>
        <taxon>Alphaproteobacteria</taxon>
        <taxon>Rickettsiales</taxon>
        <taxon>Anaplasmataceae</taxon>
        <taxon>Wolbachieae</taxon>
        <taxon>Wolbachia</taxon>
    </lineage>
</organism>